<reference key="1">
    <citation type="journal article" date="2009" name="Genome Biol.">
        <title>A whole-genome assembly of the domestic cow, Bos taurus.</title>
        <authorList>
            <person name="Zimin A.V."/>
            <person name="Delcher A.L."/>
            <person name="Florea L."/>
            <person name="Kelley D.R."/>
            <person name="Schatz M.C."/>
            <person name="Puiu D."/>
            <person name="Hanrahan F."/>
            <person name="Pertea G."/>
            <person name="Van Tassell C.P."/>
            <person name="Sonstegard T.S."/>
            <person name="Marcais G."/>
            <person name="Roberts M."/>
            <person name="Subramanian P."/>
            <person name="Yorke J.A."/>
            <person name="Salzberg S.L."/>
        </authorList>
    </citation>
    <scope>NUCLEOTIDE SEQUENCE [LARGE SCALE GENOMIC DNA]</scope>
    <source>
        <strain>Hereford</strain>
    </source>
</reference>
<reference key="2">
    <citation type="submission" date="2007-07" db="EMBL/GenBank/DDBJ databases">
        <authorList>
            <consortium name="NIH - Mammalian Gene Collection (MGC) project"/>
        </authorList>
    </citation>
    <scope>NUCLEOTIDE SEQUENCE [LARGE SCALE MRNA] (ISOFORM 2)</scope>
    <source>
        <strain>Hereford</strain>
        <tissue>Fetal cerebellum</tissue>
    </source>
</reference>
<feature type="chain" id="PRO_0000358928" description="Protein phosphatase 1 regulatory subunit 35">
    <location>
        <begin position="1"/>
        <end position="266"/>
    </location>
</feature>
<feature type="region of interest" description="Disordered" evidence="3">
    <location>
        <begin position="1"/>
        <end position="118"/>
    </location>
</feature>
<feature type="compositionally biased region" description="Polar residues" evidence="3">
    <location>
        <begin position="1"/>
        <end position="10"/>
    </location>
</feature>
<feature type="compositionally biased region" description="Pro residues" evidence="3">
    <location>
        <begin position="21"/>
        <end position="38"/>
    </location>
</feature>
<feature type="compositionally biased region" description="Basic residues" evidence="3">
    <location>
        <begin position="62"/>
        <end position="79"/>
    </location>
</feature>
<feature type="compositionally biased region" description="Pro residues" evidence="3">
    <location>
        <begin position="86"/>
        <end position="97"/>
    </location>
</feature>
<feature type="modified residue" description="Phosphoserine" evidence="1">
    <location>
        <position position="46"/>
    </location>
</feature>
<feature type="modified residue" description="Phosphoserine" evidence="1">
    <location>
        <position position="51"/>
    </location>
</feature>
<feature type="splice variant" id="VSP_042174" description="In isoform 2." evidence="4">
    <original>LNVPRSKRLFRDLVSLQVPEEQVLNAALREKLALLPPQARAPPPKEPPGPGPDMTILCDPETLFYESPHLTLEGLPPLRLQLRPRPSEDTFLMHRTLRRWEA</original>
    <variation>EGGRRPAGRGSGGARRRSPPPLMRSQG</variation>
    <location>
        <begin position="165"/>
        <end position="266"/>
    </location>
</feature>
<feature type="sequence conflict" description="In Ref. 2; AAI49392." evidence="5" ref="2">
    <original>G</original>
    <variation>E</variation>
    <location>
        <position position="93"/>
    </location>
</feature>
<name>PPR35_BOVIN</name>
<proteinExistence type="evidence at transcript level"/>
<keyword id="KW-0025">Alternative splicing</keyword>
<keyword id="KW-0963">Cytoplasm</keyword>
<keyword id="KW-0206">Cytoskeleton</keyword>
<keyword id="KW-0597">Phosphoprotein</keyword>
<keyword id="KW-0650">Protein phosphatase inhibitor</keyword>
<keyword id="KW-1185">Reference proteome</keyword>
<sequence length="266" mass="28726">MMVYNGSQLESVEEGEAVAVPGPPPEPRAPEPGAPVPEPGLDLSLSPRSESPGRGRPNCSPGRRKGRADRRGGARKGRQVRFLLAPPSPVRSGPPPAAASSSEKPEAPQDLGTPVQQSSLALSLELQAARAAAGGQFDAAKAVEEQLRKSFQTRCGLEESVTEGLNVPRSKRLFRDLVSLQVPEEQVLNAALREKLALLPPQARAPPPKEPPGPGPDMTILCDPETLFYESPHLTLEGLPPLRLQLRPRPSEDTFLMHRTLRRWEA</sequence>
<protein>
    <recommendedName>
        <fullName evidence="5">Protein phosphatase 1 regulatory subunit 35</fullName>
    </recommendedName>
</protein>
<gene>
    <name evidence="1" type="primary">PPP1R35</name>
</gene>
<accession>A6QPM6</accession>
<accession>F1MCE9</accession>
<evidence type="ECO:0000250" key="1">
    <source>
        <dbReference type="UniProtKB" id="Q8TAP8"/>
    </source>
</evidence>
<evidence type="ECO:0000250" key="2">
    <source>
        <dbReference type="UniProtKB" id="Q9D8C8"/>
    </source>
</evidence>
<evidence type="ECO:0000256" key="3">
    <source>
        <dbReference type="SAM" id="MobiDB-lite"/>
    </source>
</evidence>
<evidence type="ECO:0000303" key="4">
    <source ref="2"/>
</evidence>
<evidence type="ECO:0000305" key="5"/>
<comment type="function">
    <text evidence="1 2">During centriole duplication, plays a role in the centriole elongation by promoting the recruitment of the microtubule-binding elongation machinery through its interaction with RTTN, leading to the centriole to centrosome conversion (By similarity). In addition may play a role in the primary cilia assembly (By similarity).</text>
</comment>
<comment type="subunit">
    <text evidence="1">Interacts with PPP1CA; this interaction mediates the PPP1CA phosphatase activity inhibition. Interacts with RTTN; this interaction allows the mutual recruitment to the centriole.</text>
</comment>
<comment type="subcellular location">
    <subcellularLocation>
        <location evidence="1">Cytoplasm</location>
        <location evidence="1">Cytoskeleton</location>
        <location evidence="1">Microtubule organizing center</location>
        <location evidence="1">Centrosome</location>
    </subcellularLocation>
    <subcellularLocation>
        <location evidence="1">Cytoplasm</location>
        <location evidence="1">Cytoskeleton</location>
        <location evidence="1">Microtubule organizing center</location>
        <location evidence="1">Centrosome</location>
        <location evidence="1">Centriole</location>
    </subcellularLocation>
    <text evidence="1">Recruited to the nascent daughter centriole early in the duplication cycle and localizes to the proximal centriolar lumen just above the cartwheel. Co-localizes with RTTN at the centriole.</text>
</comment>
<comment type="alternative products">
    <event type="alternative splicing"/>
    <isoform>
        <id>A6QPM6-1</id>
        <name>1</name>
        <sequence type="displayed"/>
    </isoform>
    <isoform>
        <id>A6QPM6-2</id>
        <name>2</name>
        <sequence type="described" ref="VSP_042174"/>
    </isoform>
</comment>
<comment type="similarity">
    <text evidence="5">Belongs to the PPP1R35 family.</text>
</comment>
<organism>
    <name type="scientific">Bos taurus</name>
    <name type="common">Bovine</name>
    <dbReference type="NCBI Taxonomy" id="9913"/>
    <lineage>
        <taxon>Eukaryota</taxon>
        <taxon>Metazoa</taxon>
        <taxon>Chordata</taxon>
        <taxon>Craniata</taxon>
        <taxon>Vertebrata</taxon>
        <taxon>Euteleostomi</taxon>
        <taxon>Mammalia</taxon>
        <taxon>Eutheria</taxon>
        <taxon>Laurasiatheria</taxon>
        <taxon>Artiodactyla</taxon>
        <taxon>Ruminantia</taxon>
        <taxon>Pecora</taxon>
        <taxon>Bovidae</taxon>
        <taxon>Bovinae</taxon>
        <taxon>Bos</taxon>
    </lineage>
</organism>
<dbReference type="EMBL" id="DAAA02058281">
    <property type="status" value="NOT_ANNOTATED_CDS"/>
    <property type="molecule type" value="Genomic_DNA"/>
</dbReference>
<dbReference type="EMBL" id="BC149391">
    <property type="protein sequence ID" value="AAI49392.1"/>
    <property type="molecule type" value="mRNA"/>
</dbReference>
<dbReference type="RefSeq" id="NP_001095785.2">
    <molecule id="A6QPM6-1"/>
    <property type="nucleotide sequence ID" value="NM_001102315.2"/>
</dbReference>
<dbReference type="FunCoup" id="A6QPM6">
    <property type="interactions" value="237"/>
</dbReference>
<dbReference type="STRING" id="9913.ENSBTAP00000012252"/>
<dbReference type="PaxDb" id="9913-ENSBTAP00000012252"/>
<dbReference type="GeneID" id="617968"/>
<dbReference type="KEGG" id="bta:617968"/>
<dbReference type="CTD" id="221908"/>
<dbReference type="eggNOG" id="ENOG502S5MS">
    <property type="taxonomic scope" value="Eukaryota"/>
</dbReference>
<dbReference type="HOGENOM" id="CLU_096528_0_0_1"/>
<dbReference type="InParanoid" id="A6QPM6"/>
<dbReference type="OrthoDB" id="8942190at2759"/>
<dbReference type="TreeFam" id="TF337101"/>
<dbReference type="Proteomes" id="UP000009136">
    <property type="component" value="Unplaced"/>
</dbReference>
<dbReference type="GO" id="GO:0005814">
    <property type="term" value="C:centriole"/>
    <property type="evidence" value="ECO:0000250"/>
    <property type="project" value="UniProtKB"/>
</dbReference>
<dbReference type="GO" id="GO:0005813">
    <property type="term" value="C:centrosome"/>
    <property type="evidence" value="ECO:0000250"/>
    <property type="project" value="UniProtKB"/>
</dbReference>
<dbReference type="GO" id="GO:0005737">
    <property type="term" value="C:cytoplasm"/>
    <property type="evidence" value="ECO:0007669"/>
    <property type="project" value="UniProtKB-KW"/>
</dbReference>
<dbReference type="GO" id="GO:0019902">
    <property type="term" value="F:phosphatase binding"/>
    <property type="evidence" value="ECO:0007669"/>
    <property type="project" value="InterPro"/>
</dbReference>
<dbReference type="GO" id="GO:0004864">
    <property type="term" value="F:protein phosphatase inhibitor activity"/>
    <property type="evidence" value="ECO:0007669"/>
    <property type="project" value="UniProtKB-KW"/>
</dbReference>
<dbReference type="GO" id="GO:0048570">
    <property type="term" value="P:notochord morphogenesis"/>
    <property type="evidence" value="ECO:0000250"/>
    <property type="project" value="UniProtKB"/>
</dbReference>
<dbReference type="GO" id="GO:1903724">
    <property type="term" value="P:positive regulation of centriole elongation"/>
    <property type="evidence" value="ECO:0000250"/>
    <property type="project" value="UniProtKB"/>
</dbReference>
<dbReference type="GO" id="GO:0045724">
    <property type="term" value="P:positive regulation of cilium assembly"/>
    <property type="evidence" value="ECO:0000250"/>
    <property type="project" value="UniProtKB"/>
</dbReference>
<dbReference type="InterPro" id="IPR033590">
    <property type="entry name" value="PPP1R35"/>
</dbReference>
<dbReference type="InterPro" id="IPR029135">
    <property type="entry name" value="PPP1R35_C"/>
</dbReference>
<dbReference type="PANTHER" id="PTHR28625">
    <property type="entry name" value="PROTEIN PHOSPHATASE 1 REGULATORY SUBUNIT 35"/>
    <property type="match status" value="1"/>
</dbReference>
<dbReference type="PANTHER" id="PTHR28625:SF1">
    <property type="entry name" value="PROTEIN PHOSPHATASE 1 REGULATORY SUBUNIT 35"/>
    <property type="match status" value="1"/>
</dbReference>
<dbReference type="Pfam" id="PF15503">
    <property type="entry name" value="PPP1R35_C"/>
    <property type="match status" value="1"/>
</dbReference>